<comment type="function">
    <text evidence="1">Involved in the synthesis of autoinducer 2 (AI-2) which is secreted by bacteria and is used to communicate both the cell density and the metabolic potential of the environment. The regulation of gene expression in response to changes in cell density is called quorum sensing. Catalyzes the transformation of S-ribosylhomocysteine (RHC) to homocysteine (HC) and 4,5-dihydroxy-2,3-pentadione (DPD).</text>
</comment>
<comment type="catalytic activity">
    <reaction evidence="1">
        <text>S-(5-deoxy-D-ribos-5-yl)-L-homocysteine = (S)-4,5-dihydroxypentane-2,3-dione + L-homocysteine</text>
        <dbReference type="Rhea" id="RHEA:17753"/>
        <dbReference type="ChEBI" id="CHEBI:29484"/>
        <dbReference type="ChEBI" id="CHEBI:58195"/>
        <dbReference type="ChEBI" id="CHEBI:58199"/>
        <dbReference type="EC" id="4.4.1.21"/>
    </reaction>
</comment>
<comment type="cofactor">
    <cofactor evidence="1">
        <name>Fe cation</name>
        <dbReference type="ChEBI" id="CHEBI:24875"/>
    </cofactor>
    <text evidence="1">Binds 1 Fe cation per subunit.</text>
</comment>
<comment type="subunit">
    <text evidence="1">Homodimer.</text>
</comment>
<comment type="similarity">
    <text evidence="1">Belongs to the LuxS family.</text>
</comment>
<comment type="sequence caution" evidence="2">
    <conflict type="erroneous initiation">
        <sequence resource="EMBL-CDS" id="CAG21373"/>
    </conflict>
</comment>
<evidence type="ECO:0000255" key="1">
    <source>
        <dbReference type="HAMAP-Rule" id="MF_00091"/>
    </source>
</evidence>
<evidence type="ECO:0000305" key="2"/>
<sequence>MPLLDSFTVDHTRMNAPAVRVAKTMQTPKGDTITVFDLRFCRPNMDILSERGIHTLEHLYAGFMRNHLNSERVEIIDISPMGCRTGFYMSLIGTPSEQDVAAGWTAAMEDVLNVESQDQIPELNEYQCGTYSMHSLEEAKDIAKTILAEGINVNKNDELALPESMLKELDVK</sequence>
<feature type="chain" id="PRO_0000172244" description="S-ribosylhomocysteine lyase">
    <location>
        <begin position="1"/>
        <end position="172"/>
    </location>
</feature>
<feature type="binding site" evidence="1">
    <location>
        <position position="54"/>
    </location>
    <ligand>
        <name>Fe cation</name>
        <dbReference type="ChEBI" id="CHEBI:24875"/>
    </ligand>
</feature>
<feature type="binding site" evidence="1">
    <location>
        <position position="58"/>
    </location>
    <ligand>
        <name>Fe cation</name>
        <dbReference type="ChEBI" id="CHEBI:24875"/>
    </ligand>
</feature>
<feature type="binding site" evidence="1">
    <location>
        <position position="128"/>
    </location>
    <ligand>
        <name>Fe cation</name>
        <dbReference type="ChEBI" id="CHEBI:24875"/>
    </ligand>
</feature>
<proteinExistence type="inferred from homology"/>
<gene>
    <name evidence="1" type="primary">luxS</name>
    <name type="ordered locus">PBPRA3045</name>
</gene>
<name>LUXS_PHOPR</name>
<protein>
    <recommendedName>
        <fullName evidence="1">S-ribosylhomocysteine lyase</fullName>
        <ecNumber evidence="1">4.4.1.21</ecNumber>
    </recommendedName>
    <alternativeName>
        <fullName evidence="1">AI-2 synthesis protein</fullName>
    </alternativeName>
    <alternativeName>
        <fullName evidence="1">Autoinducer-2 production protein LuxS</fullName>
    </alternativeName>
</protein>
<keyword id="KW-0071">Autoinducer synthesis</keyword>
<keyword id="KW-0408">Iron</keyword>
<keyword id="KW-0456">Lyase</keyword>
<keyword id="KW-0479">Metal-binding</keyword>
<keyword id="KW-0673">Quorum sensing</keyword>
<keyword id="KW-1185">Reference proteome</keyword>
<reference key="1">
    <citation type="journal article" date="2005" name="Science">
        <title>Life at depth: Photobacterium profundum genome sequence and expression analysis.</title>
        <authorList>
            <person name="Vezzi A."/>
            <person name="Campanaro S."/>
            <person name="D'Angelo M."/>
            <person name="Simonato F."/>
            <person name="Vitulo N."/>
            <person name="Lauro F.M."/>
            <person name="Cestaro A."/>
            <person name="Malacrida G."/>
            <person name="Simionati B."/>
            <person name="Cannata N."/>
            <person name="Romualdi C."/>
            <person name="Bartlett D.H."/>
            <person name="Valle G."/>
        </authorList>
    </citation>
    <scope>NUCLEOTIDE SEQUENCE [LARGE SCALE GENOMIC DNA]</scope>
    <source>
        <strain>ATCC BAA-1253 / SS9</strain>
    </source>
</reference>
<accession>Q6LMV3</accession>
<organism>
    <name type="scientific">Photobacterium profundum (strain SS9)</name>
    <dbReference type="NCBI Taxonomy" id="298386"/>
    <lineage>
        <taxon>Bacteria</taxon>
        <taxon>Pseudomonadati</taxon>
        <taxon>Pseudomonadota</taxon>
        <taxon>Gammaproteobacteria</taxon>
        <taxon>Vibrionales</taxon>
        <taxon>Vibrionaceae</taxon>
        <taxon>Photobacterium</taxon>
    </lineage>
</organism>
<dbReference type="EC" id="4.4.1.21" evidence="1"/>
<dbReference type="EMBL" id="CR378673">
    <property type="protein sequence ID" value="CAG21373.1"/>
    <property type="status" value="ALT_INIT"/>
    <property type="molecule type" value="Genomic_DNA"/>
</dbReference>
<dbReference type="RefSeq" id="WP_041394506.1">
    <property type="nucleotide sequence ID" value="NC_006370.1"/>
</dbReference>
<dbReference type="SMR" id="Q6LMV3"/>
<dbReference type="STRING" id="298386.PBPRA3045"/>
<dbReference type="KEGG" id="ppr:PBPRA3045"/>
<dbReference type="eggNOG" id="COG1854">
    <property type="taxonomic scope" value="Bacteria"/>
</dbReference>
<dbReference type="HOGENOM" id="CLU_107531_2_0_6"/>
<dbReference type="Proteomes" id="UP000000593">
    <property type="component" value="Chromosome 1"/>
</dbReference>
<dbReference type="GO" id="GO:0005506">
    <property type="term" value="F:iron ion binding"/>
    <property type="evidence" value="ECO:0007669"/>
    <property type="project" value="InterPro"/>
</dbReference>
<dbReference type="GO" id="GO:0043768">
    <property type="term" value="F:S-ribosylhomocysteine lyase activity"/>
    <property type="evidence" value="ECO:0007669"/>
    <property type="project" value="UniProtKB-UniRule"/>
</dbReference>
<dbReference type="GO" id="GO:0009372">
    <property type="term" value="P:quorum sensing"/>
    <property type="evidence" value="ECO:0007669"/>
    <property type="project" value="UniProtKB-UniRule"/>
</dbReference>
<dbReference type="FunFam" id="3.30.1360.80:FF:000001">
    <property type="entry name" value="S-ribosylhomocysteine lyase"/>
    <property type="match status" value="1"/>
</dbReference>
<dbReference type="Gene3D" id="3.30.1360.80">
    <property type="entry name" value="S-ribosylhomocysteinase (LuxS)"/>
    <property type="match status" value="1"/>
</dbReference>
<dbReference type="HAMAP" id="MF_00091">
    <property type="entry name" value="LuxS"/>
    <property type="match status" value="1"/>
</dbReference>
<dbReference type="InterPro" id="IPR037005">
    <property type="entry name" value="LuxS_sf"/>
</dbReference>
<dbReference type="InterPro" id="IPR011249">
    <property type="entry name" value="Metalloenz_LuxS/M16"/>
</dbReference>
<dbReference type="InterPro" id="IPR003815">
    <property type="entry name" value="S-ribosylhomocysteinase"/>
</dbReference>
<dbReference type="NCBIfam" id="NF002602">
    <property type="entry name" value="PRK02260.1-2"/>
    <property type="match status" value="1"/>
</dbReference>
<dbReference type="PANTHER" id="PTHR35799">
    <property type="entry name" value="S-RIBOSYLHOMOCYSTEINE LYASE"/>
    <property type="match status" value="1"/>
</dbReference>
<dbReference type="PANTHER" id="PTHR35799:SF1">
    <property type="entry name" value="S-RIBOSYLHOMOCYSTEINE LYASE"/>
    <property type="match status" value="1"/>
</dbReference>
<dbReference type="Pfam" id="PF02664">
    <property type="entry name" value="LuxS"/>
    <property type="match status" value="1"/>
</dbReference>
<dbReference type="PIRSF" id="PIRSF006160">
    <property type="entry name" value="AI2"/>
    <property type="match status" value="1"/>
</dbReference>
<dbReference type="PRINTS" id="PR01487">
    <property type="entry name" value="LUXSPROTEIN"/>
</dbReference>
<dbReference type="SUPFAM" id="SSF63411">
    <property type="entry name" value="LuxS/MPP-like metallohydrolase"/>
    <property type="match status" value="1"/>
</dbReference>